<name>NDHJ_TRIEI</name>
<comment type="function">
    <text evidence="1">NDH-1 shuttles electrons from an unknown electron donor, via FMN and iron-sulfur (Fe-S) centers, to quinones in the respiratory and/or the photosynthetic chain. The immediate electron acceptor for the enzyme in this species is believed to be plastoquinone. Couples the redox reaction to proton translocation, and thus conserves the redox energy in a proton gradient. Cyanobacterial NDH-1 also plays a role in inorganic carbon-concentration.</text>
</comment>
<comment type="catalytic activity">
    <reaction evidence="1">
        <text>a plastoquinone + NADH + (n+1) H(+)(in) = a plastoquinol + NAD(+) + n H(+)(out)</text>
        <dbReference type="Rhea" id="RHEA:42608"/>
        <dbReference type="Rhea" id="RHEA-COMP:9561"/>
        <dbReference type="Rhea" id="RHEA-COMP:9562"/>
        <dbReference type="ChEBI" id="CHEBI:15378"/>
        <dbReference type="ChEBI" id="CHEBI:17757"/>
        <dbReference type="ChEBI" id="CHEBI:57540"/>
        <dbReference type="ChEBI" id="CHEBI:57945"/>
        <dbReference type="ChEBI" id="CHEBI:62192"/>
    </reaction>
</comment>
<comment type="catalytic activity">
    <reaction evidence="1">
        <text>a plastoquinone + NADPH + (n+1) H(+)(in) = a plastoquinol + NADP(+) + n H(+)(out)</text>
        <dbReference type="Rhea" id="RHEA:42612"/>
        <dbReference type="Rhea" id="RHEA-COMP:9561"/>
        <dbReference type="Rhea" id="RHEA-COMP:9562"/>
        <dbReference type="ChEBI" id="CHEBI:15378"/>
        <dbReference type="ChEBI" id="CHEBI:17757"/>
        <dbReference type="ChEBI" id="CHEBI:57783"/>
        <dbReference type="ChEBI" id="CHEBI:58349"/>
        <dbReference type="ChEBI" id="CHEBI:62192"/>
    </reaction>
</comment>
<comment type="subunit">
    <text evidence="1">NDH-1 can be composed of about 15 different subunits; different subcomplexes with different compositions have been identified which probably have different functions.</text>
</comment>
<comment type="subcellular location">
    <subcellularLocation>
        <location evidence="1">Cellular thylakoid membrane</location>
        <topology evidence="1">Peripheral membrane protein</topology>
        <orientation evidence="1">Cytoplasmic side</orientation>
    </subcellularLocation>
</comment>
<comment type="similarity">
    <text evidence="1">Belongs to the complex I 30 kDa subunit family.</text>
</comment>
<accession>Q10YT5</accession>
<protein>
    <recommendedName>
        <fullName evidence="1">NAD(P)H-quinone oxidoreductase subunit J</fullName>
        <ecNumber evidence="1">7.1.1.-</ecNumber>
    </recommendedName>
    <alternativeName>
        <fullName>NAD(P)H dehydrogenase subunit J</fullName>
    </alternativeName>
    <alternativeName>
        <fullName evidence="1">NADH-plastoquinone oxidoreductase subunit J</fullName>
    </alternativeName>
    <alternativeName>
        <fullName evidence="1">NDH-1 subunit J</fullName>
        <shortName evidence="1">NDH-J</shortName>
    </alternativeName>
</protein>
<feature type="chain" id="PRO_0000358218" description="NAD(P)H-quinone oxidoreductase subunit J">
    <location>
        <begin position="1"/>
        <end position="167"/>
    </location>
</feature>
<reference key="1">
    <citation type="journal article" date="2015" name="Proc. Natl. Acad. Sci. U.S.A.">
        <title>Trichodesmium genome maintains abundant, widespread noncoding DNA in situ, despite oligotrophic lifestyle.</title>
        <authorList>
            <person name="Walworth N."/>
            <person name="Pfreundt U."/>
            <person name="Nelson W.C."/>
            <person name="Mincer T."/>
            <person name="Heidelberg J.F."/>
            <person name="Fu F."/>
            <person name="Waterbury J.B."/>
            <person name="Glavina del Rio T."/>
            <person name="Goodwin L."/>
            <person name="Kyrpides N.C."/>
            <person name="Land M.L."/>
            <person name="Woyke T."/>
            <person name="Hutchins D.A."/>
            <person name="Hess W.R."/>
            <person name="Webb E.A."/>
        </authorList>
    </citation>
    <scope>NUCLEOTIDE SEQUENCE [LARGE SCALE GENOMIC DNA]</scope>
    <source>
        <strain>IMS101</strain>
    </source>
</reference>
<gene>
    <name evidence="1" type="primary">ndhJ</name>
    <name type="ordered locus">Tery_3499</name>
</gene>
<evidence type="ECO:0000255" key="1">
    <source>
        <dbReference type="HAMAP-Rule" id="MF_01357"/>
    </source>
</evidence>
<sequence>MAESEAPIIEAGKVSKWLTDNGFDHEFLAPDHQGIEIIKGNRDFLIPLATALYAYGFNYLQCQCAYDAGPGEDLVSMYHLVKVSDDVEQPEEIRLKVFVPRDDPRLPSVYWIWKSADFQERESYDMYGIIYEGHPNLKRILMPEDWVGWPLRKDYISPEFYELQDAY</sequence>
<keyword id="KW-0472">Membrane</keyword>
<keyword id="KW-0520">NAD</keyword>
<keyword id="KW-0521">NADP</keyword>
<keyword id="KW-0618">Plastoquinone</keyword>
<keyword id="KW-0874">Quinone</keyword>
<keyword id="KW-0793">Thylakoid</keyword>
<keyword id="KW-1278">Translocase</keyword>
<keyword id="KW-0813">Transport</keyword>
<organism>
    <name type="scientific">Trichodesmium erythraeum (strain IMS101)</name>
    <dbReference type="NCBI Taxonomy" id="203124"/>
    <lineage>
        <taxon>Bacteria</taxon>
        <taxon>Bacillati</taxon>
        <taxon>Cyanobacteriota</taxon>
        <taxon>Cyanophyceae</taxon>
        <taxon>Oscillatoriophycideae</taxon>
        <taxon>Oscillatoriales</taxon>
        <taxon>Microcoleaceae</taxon>
        <taxon>Trichodesmium</taxon>
    </lineage>
</organism>
<dbReference type="EC" id="7.1.1.-" evidence="1"/>
<dbReference type="EMBL" id="CP000393">
    <property type="protein sequence ID" value="ABG52589.1"/>
    <property type="molecule type" value="Genomic_DNA"/>
</dbReference>
<dbReference type="RefSeq" id="WP_011612931.1">
    <property type="nucleotide sequence ID" value="NC_008312.1"/>
</dbReference>
<dbReference type="SMR" id="Q10YT5"/>
<dbReference type="STRING" id="203124.Tery_3499"/>
<dbReference type="KEGG" id="ter:Tery_3499"/>
<dbReference type="eggNOG" id="COG0852">
    <property type="taxonomic scope" value="Bacteria"/>
</dbReference>
<dbReference type="HOGENOM" id="CLU_042628_9_1_3"/>
<dbReference type="OrthoDB" id="9803286at2"/>
<dbReference type="GO" id="GO:0031676">
    <property type="term" value="C:plasma membrane-derived thylakoid membrane"/>
    <property type="evidence" value="ECO:0007669"/>
    <property type="project" value="UniProtKB-SubCell"/>
</dbReference>
<dbReference type="GO" id="GO:0008137">
    <property type="term" value="F:NADH dehydrogenase (ubiquinone) activity"/>
    <property type="evidence" value="ECO:0007669"/>
    <property type="project" value="InterPro"/>
</dbReference>
<dbReference type="GO" id="GO:0048038">
    <property type="term" value="F:quinone binding"/>
    <property type="evidence" value="ECO:0007669"/>
    <property type="project" value="UniProtKB-KW"/>
</dbReference>
<dbReference type="GO" id="GO:0019684">
    <property type="term" value="P:photosynthesis, light reaction"/>
    <property type="evidence" value="ECO:0007669"/>
    <property type="project" value="UniProtKB-UniRule"/>
</dbReference>
<dbReference type="Gene3D" id="3.30.460.80">
    <property type="entry name" value="NADH:ubiquinone oxidoreductase, 30kDa subunit"/>
    <property type="match status" value="1"/>
</dbReference>
<dbReference type="HAMAP" id="MF_01357">
    <property type="entry name" value="NDH1_NuoC"/>
    <property type="match status" value="1"/>
</dbReference>
<dbReference type="InterPro" id="IPR010218">
    <property type="entry name" value="NADH_DH_suC"/>
</dbReference>
<dbReference type="InterPro" id="IPR037232">
    <property type="entry name" value="NADH_quin_OxRdtase_su_C/D-like"/>
</dbReference>
<dbReference type="InterPro" id="IPR001268">
    <property type="entry name" value="NADH_UbQ_OxRdtase_30kDa_su"/>
</dbReference>
<dbReference type="InterPro" id="IPR020396">
    <property type="entry name" value="NADH_UbQ_OxRdtase_CS"/>
</dbReference>
<dbReference type="NCBIfam" id="NF009141">
    <property type="entry name" value="PRK12494.1"/>
    <property type="match status" value="1"/>
</dbReference>
<dbReference type="PANTHER" id="PTHR10884:SF14">
    <property type="entry name" value="NADH DEHYDROGENASE [UBIQUINONE] IRON-SULFUR PROTEIN 3, MITOCHONDRIAL"/>
    <property type="match status" value="1"/>
</dbReference>
<dbReference type="PANTHER" id="PTHR10884">
    <property type="entry name" value="NADH DEHYDROGENASE UBIQUINONE IRON-SULFUR PROTEIN 3"/>
    <property type="match status" value="1"/>
</dbReference>
<dbReference type="Pfam" id="PF00329">
    <property type="entry name" value="Complex1_30kDa"/>
    <property type="match status" value="1"/>
</dbReference>
<dbReference type="SUPFAM" id="SSF143243">
    <property type="entry name" value="Nqo5-like"/>
    <property type="match status" value="1"/>
</dbReference>
<dbReference type="PROSITE" id="PS00542">
    <property type="entry name" value="COMPLEX1_30K"/>
    <property type="match status" value="1"/>
</dbReference>
<proteinExistence type="inferred from homology"/>